<sequence>MKVKDFDFYLPEELIAQHPMEKRDEARLLVLDKETGEIEHKIFKDILDYLTPNDCLVLNNTRVLPARLIGSKEETGGKMEFLLLKRKEKDVWETLVKPGKRAQIGARFIFGNGELKAEVIGMGEEGSRIVKFYYEGIFEEILDQLGQMPLPPYIKEKLDDKEMYQTVYSKEEGSAAAPTAGLHFTEELLKKIEEKGVKLAFLTLHVGLGTFRPVKVEDIQEHVMHSEYYKMDKKTAEIINDTKENGGRVIAVGTTSCRTLETIADIEGKVGEQSGWTDIFIYPGYKYKVVDALITNFHLPQSTLLMLVSALAGKDNIMNAYNVAVEKEYRFFSFGDAMFIK</sequence>
<evidence type="ECO:0000255" key="1">
    <source>
        <dbReference type="HAMAP-Rule" id="MF_00113"/>
    </source>
</evidence>
<keyword id="KW-0963">Cytoplasm</keyword>
<keyword id="KW-0671">Queuosine biosynthesis</keyword>
<keyword id="KW-0949">S-adenosyl-L-methionine</keyword>
<keyword id="KW-0808">Transferase</keyword>
<gene>
    <name evidence="1" type="primary">queA</name>
    <name type="ordered locus">CLD_1471</name>
</gene>
<reference key="1">
    <citation type="journal article" date="2007" name="PLoS ONE">
        <title>Analysis of the neurotoxin complex genes in Clostridium botulinum A1-A4 and B1 strains: BoNT/A3, /Ba4 and /B1 clusters are located within plasmids.</title>
        <authorList>
            <person name="Smith T.J."/>
            <person name="Hill K.K."/>
            <person name="Foley B.T."/>
            <person name="Detter J.C."/>
            <person name="Munk A.C."/>
            <person name="Bruce D.C."/>
            <person name="Doggett N.A."/>
            <person name="Smith L.A."/>
            <person name="Marks J.D."/>
            <person name="Xie G."/>
            <person name="Brettin T.S."/>
        </authorList>
    </citation>
    <scope>NUCLEOTIDE SEQUENCE [LARGE SCALE GENOMIC DNA]</scope>
    <source>
        <strain>Okra / Type B1</strain>
    </source>
</reference>
<name>QUEA_CLOBK</name>
<dbReference type="EC" id="2.4.99.17" evidence="1"/>
<dbReference type="EMBL" id="CP000939">
    <property type="protein sequence ID" value="ACA46825.1"/>
    <property type="molecule type" value="Genomic_DNA"/>
</dbReference>
<dbReference type="RefSeq" id="WP_003403623.1">
    <property type="nucleotide sequence ID" value="NC_010516.1"/>
</dbReference>
<dbReference type="SMR" id="B1IMF2"/>
<dbReference type="KEGG" id="cbb:CLD_1471"/>
<dbReference type="HOGENOM" id="CLU_039110_1_0_9"/>
<dbReference type="UniPathway" id="UPA00392"/>
<dbReference type="Proteomes" id="UP000008541">
    <property type="component" value="Chromosome"/>
</dbReference>
<dbReference type="GO" id="GO:0005737">
    <property type="term" value="C:cytoplasm"/>
    <property type="evidence" value="ECO:0007669"/>
    <property type="project" value="UniProtKB-SubCell"/>
</dbReference>
<dbReference type="GO" id="GO:0051075">
    <property type="term" value="F:S-adenosylmethionine:tRNA ribosyltransferase-isomerase activity"/>
    <property type="evidence" value="ECO:0007669"/>
    <property type="project" value="UniProtKB-EC"/>
</dbReference>
<dbReference type="GO" id="GO:0008616">
    <property type="term" value="P:queuosine biosynthetic process"/>
    <property type="evidence" value="ECO:0007669"/>
    <property type="project" value="UniProtKB-UniRule"/>
</dbReference>
<dbReference type="GO" id="GO:0002099">
    <property type="term" value="P:tRNA wobble guanine modification"/>
    <property type="evidence" value="ECO:0007669"/>
    <property type="project" value="TreeGrafter"/>
</dbReference>
<dbReference type="FunFam" id="2.40.10.240:FF:000002">
    <property type="entry name" value="S-adenosylmethionine:tRNA ribosyltransferase-isomerase"/>
    <property type="match status" value="1"/>
</dbReference>
<dbReference type="FunFam" id="3.40.1780.10:FF:000001">
    <property type="entry name" value="S-adenosylmethionine:tRNA ribosyltransferase-isomerase"/>
    <property type="match status" value="1"/>
</dbReference>
<dbReference type="Gene3D" id="2.40.10.240">
    <property type="entry name" value="QueA-like"/>
    <property type="match status" value="1"/>
</dbReference>
<dbReference type="Gene3D" id="3.40.1780.10">
    <property type="entry name" value="QueA-like"/>
    <property type="match status" value="1"/>
</dbReference>
<dbReference type="HAMAP" id="MF_00113">
    <property type="entry name" value="QueA"/>
    <property type="match status" value="1"/>
</dbReference>
<dbReference type="InterPro" id="IPR003699">
    <property type="entry name" value="QueA"/>
</dbReference>
<dbReference type="InterPro" id="IPR042118">
    <property type="entry name" value="QueA_dom1"/>
</dbReference>
<dbReference type="InterPro" id="IPR042119">
    <property type="entry name" value="QueA_dom2"/>
</dbReference>
<dbReference type="InterPro" id="IPR036100">
    <property type="entry name" value="QueA_sf"/>
</dbReference>
<dbReference type="NCBIfam" id="NF001140">
    <property type="entry name" value="PRK00147.1"/>
    <property type="match status" value="1"/>
</dbReference>
<dbReference type="NCBIfam" id="TIGR00113">
    <property type="entry name" value="queA"/>
    <property type="match status" value="1"/>
</dbReference>
<dbReference type="PANTHER" id="PTHR30307">
    <property type="entry name" value="S-ADENOSYLMETHIONINE:TRNA RIBOSYLTRANSFERASE-ISOMERASE"/>
    <property type="match status" value="1"/>
</dbReference>
<dbReference type="PANTHER" id="PTHR30307:SF0">
    <property type="entry name" value="S-ADENOSYLMETHIONINE:TRNA RIBOSYLTRANSFERASE-ISOMERASE"/>
    <property type="match status" value="1"/>
</dbReference>
<dbReference type="Pfam" id="PF02547">
    <property type="entry name" value="Queuosine_synth"/>
    <property type="match status" value="1"/>
</dbReference>
<dbReference type="SUPFAM" id="SSF111337">
    <property type="entry name" value="QueA-like"/>
    <property type="match status" value="1"/>
</dbReference>
<comment type="function">
    <text evidence="1">Transfers and isomerizes the ribose moiety from AdoMet to the 7-aminomethyl group of 7-deazaguanine (preQ1-tRNA) to give epoxyqueuosine (oQ-tRNA).</text>
</comment>
<comment type="catalytic activity">
    <reaction evidence="1">
        <text>7-aminomethyl-7-carbaguanosine(34) in tRNA + S-adenosyl-L-methionine = epoxyqueuosine(34) in tRNA + adenine + L-methionine + 2 H(+)</text>
        <dbReference type="Rhea" id="RHEA:32155"/>
        <dbReference type="Rhea" id="RHEA-COMP:10342"/>
        <dbReference type="Rhea" id="RHEA-COMP:18582"/>
        <dbReference type="ChEBI" id="CHEBI:15378"/>
        <dbReference type="ChEBI" id="CHEBI:16708"/>
        <dbReference type="ChEBI" id="CHEBI:57844"/>
        <dbReference type="ChEBI" id="CHEBI:59789"/>
        <dbReference type="ChEBI" id="CHEBI:82833"/>
        <dbReference type="ChEBI" id="CHEBI:194443"/>
        <dbReference type="EC" id="2.4.99.17"/>
    </reaction>
</comment>
<comment type="pathway">
    <text evidence="1">tRNA modification; tRNA-queuosine biosynthesis.</text>
</comment>
<comment type="subunit">
    <text evidence="1">Monomer.</text>
</comment>
<comment type="subcellular location">
    <subcellularLocation>
        <location evidence="1">Cytoplasm</location>
    </subcellularLocation>
</comment>
<comment type="similarity">
    <text evidence="1">Belongs to the QueA family.</text>
</comment>
<protein>
    <recommendedName>
        <fullName evidence="1">S-adenosylmethionine:tRNA ribosyltransferase-isomerase</fullName>
        <ecNumber evidence="1">2.4.99.17</ecNumber>
    </recommendedName>
    <alternativeName>
        <fullName evidence="1">Queuosine biosynthesis protein QueA</fullName>
    </alternativeName>
</protein>
<accession>B1IMF2</accession>
<feature type="chain" id="PRO_1000094767" description="S-adenosylmethionine:tRNA ribosyltransferase-isomerase">
    <location>
        <begin position="1"/>
        <end position="341"/>
    </location>
</feature>
<organism>
    <name type="scientific">Clostridium botulinum (strain Okra / Type B1)</name>
    <dbReference type="NCBI Taxonomy" id="498213"/>
    <lineage>
        <taxon>Bacteria</taxon>
        <taxon>Bacillati</taxon>
        <taxon>Bacillota</taxon>
        <taxon>Clostridia</taxon>
        <taxon>Eubacteriales</taxon>
        <taxon>Clostridiaceae</taxon>
        <taxon>Clostridium</taxon>
    </lineage>
</organism>
<proteinExistence type="inferred from homology"/>